<organism>
    <name type="scientific">Gibberella zeae (strain ATCC MYA-4620 / CBS 123657 / FGSC 9075 / NRRL 31084 / PH-1)</name>
    <name type="common">Wheat head blight fungus</name>
    <name type="synonym">Fusarium graminearum</name>
    <dbReference type="NCBI Taxonomy" id="229533"/>
    <lineage>
        <taxon>Eukaryota</taxon>
        <taxon>Fungi</taxon>
        <taxon>Dikarya</taxon>
        <taxon>Ascomycota</taxon>
        <taxon>Pezizomycotina</taxon>
        <taxon>Sordariomycetes</taxon>
        <taxon>Hypocreomycetidae</taxon>
        <taxon>Hypocreales</taxon>
        <taxon>Nectriaceae</taxon>
        <taxon>Fusarium</taxon>
    </lineage>
</organism>
<dbReference type="EMBL" id="DS231664">
    <property type="protein sequence ID" value="ESU08505.1"/>
    <property type="molecule type" value="Genomic_DNA"/>
</dbReference>
<dbReference type="EMBL" id="HG970333">
    <property type="protein sequence ID" value="CEF79613.1"/>
    <property type="molecule type" value="Genomic_DNA"/>
</dbReference>
<dbReference type="RefSeq" id="XP_011321004.1">
    <property type="nucleotide sequence ID" value="XM_011322702.1"/>
</dbReference>
<dbReference type="SMR" id="I1RL06"/>
<dbReference type="FunCoup" id="I1RL06">
    <property type="interactions" value="366"/>
</dbReference>
<dbReference type="STRING" id="229533.I1RL06"/>
<dbReference type="GlyCosmos" id="I1RL06">
    <property type="glycosylation" value="8 sites, No reported glycans"/>
</dbReference>
<dbReference type="GeneID" id="23551821"/>
<dbReference type="KEGG" id="fgr:FGSG_04580"/>
<dbReference type="VEuPathDB" id="FungiDB:FGRAMPH1_01G15627"/>
<dbReference type="eggNOG" id="KOG0065">
    <property type="taxonomic scope" value="Eukaryota"/>
</dbReference>
<dbReference type="HOGENOM" id="CLU_000604_35_0_1"/>
<dbReference type="InParanoid" id="I1RL06"/>
<dbReference type="OrthoDB" id="55774at110618"/>
<dbReference type="PHI-base" id="PHI:3697"/>
<dbReference type="PHI-base" id="PHI:3925"/>
<dbReference type="Proteomes" id="UP000070720">
    <property type="component" value="Chromosome 2"/>
</dbReference>
<dbReference type="GO" id="GO:0005886">
    <property type="term" value="C:plasma membrane"/>
    <property type="evidence" value="ECO:0007669"/>
    <property type="project" value="UniProtKB-SubCell"/>
</dbReference>
<dbReference type="GO" id="GO:0005774">
    <property type="term" value="C:vacuolar membrane"/>
    <property type="evidence" value="ECO:0007669"/>
    <property type="project" value="UniProtKB-SubCell"/>
</dbReference>
<dbReference type="GO" id="GO:0140359">
    <property type="term" value="F:ABC-type transporter activity"/>
    <property type="evidence" value="ECO:0007669"/>
    <property type="project" value="InterPro"/>
</dbReference>
<dbReference type="GO" id="GO:0005524">
    <property type="term" value="F:ATP binding"/>
    <property type="evidence" value="ECO:0007669"/>
    <property type="project" value="UniProtKB-KW"/>
</dbReference>
<dbReference type="GO" id="GO:0016887">
    <property type="term" value="F:ATP hydrolysis activity"/>
    <property type="evidence" value="ECO:0007669"/>
    <property type="project" value="InterPro"/>
</dbReference>
<dbReference type="GO" id="GO:0106150">
    <property type="term" value="P:zearalenone biosynthetic process"/>
    <property type="evidence" value="ECO:0000315"/>
    <property type="project" value="GO_Central"/>
</dbReference>
<dbReference type="CDD" id="cd03233">
    <property type="entry name" value="ABCG_PDR_domain1"/>
    <property type="match status" value="1"/>
</dbReference>
<dbReference type="CDD" id="cd03232">
    <property type="entry name" value="ABCG_PDR_domain2"/>
    <property type="match status" value="1"/>
</dbReference>
<dbReference type="FunFam" id="3.40.50.300:FF:000054">
    <property type="entry name" value="ABC multidrug transporter atrF"/>
    <property type="match status" value="1"/>
</dbReference>
<dbReference type="Gene3D" id="3.40.50.300">
    <property type="entry name" value="P-loop containing nucleotide triphosphate hydrolases"/>
    <property type="match status" value="2"/>
</dbReference>
<dbReference type="InterPro" id="IPR003593">
    <property type="entry name" value="AAA+_ATPase"/>
</dbReference>
<dbReference type="InterPro" id="IPR013525">
    <property type="entry name" value="ABC2_TM"/>
</dbReference>
<dbReference type="InterPro" id="IPR029481">
    <property type="entry name" value="ABC_trans_N"/>
</dbReference>
<dbReference type="InterPro" id="IPR003439">
    <property type="entry name" value="ABC_transporter-like_ATP-bd"/>
</dbReference>
<dbReference type="InterPro" id="IPR017871">
    <property type="entry name" value="ABC_transporter-like_CS"/>
</dbReference>
<dbReference type="InterPro" id="IPR043926">
    <property type="entry name" value="ABCG_dom"/>
</dbReference>
<dbReference type="InterPro" id="IPR034001">
    <property type="entry name" value="ABCG_PDR_1"/>
</dbReference>
<dbReference type="InterPro" id="IPR034003">
    <property type="entry name" value="ABCG_PDR_2"/>
</dbReference>
<dbReference type="InterPro" id="IPR027417">
    <property type="entry name" value="P-loop_NTPase"/>
</dbReference>
<dbReference type="InterPro" id="IPR010929">
    <property type="entry name" value="PDR_CDR_ABC"/>
</dbReference>
<dbReference type="PANTHER" id="PTHR19241">
    <property type="entry name" value="ATP-BINDING CASSETTE TRANSPORTER"/>
    <property type="match status" value="1"/>
</dbReference>
<dbReference type="Pfam" id="PF01061">
    <property type="entry name" value="ABC2_membrane"/>
    <property type="match status" value="2"/>
</dbReference>
<dbReference type="Pfam" id="PF19055">
    <property type="entry name" value="ABC2_membrane_7"/>
    <property type="match status" value="1"/>
</dbReference>
<dbReference type="Pfam" id="PF00005">
    <property type="entry name" value="ABC_tran"/>
    <property type="match status" value="2"/>
</dbReference>
<dbReference type="Pfam" id="PF14510">
    <property type="entry name" value="ABC_trans_N"/>
    <property type="match status" value="1"/>
</dbReference>
<dbReference type="Pfam" id="PF06422">
    <property type="entry name" value="PDR_CDR"/>
    <property type="match status" value="1"/>
</dbReference>
<dbReference type="SMART" id="SM00382">
    <property type="entry name" value="AAA"/>
    <property type="match status" value="2"/>
</dbReference>
<dbReference type="SUPFAM" id="SSF52540">
    <property type="entry name" value="P-loop containing nucleoside triphosphate hydrolases"/>
    <property type="match status" value="2"/>
</dbReference>
<dbReference type="PROSITE" id="PS00211">
    <property type="entry name" value="ABC_TRANSPORTER_1"/>
    <property type="match status" value="1"/>
</dbReference>
<dbReference type="PROSITE" id="PS50893">
    <property type="entry name" value="ABC_TRANSPORTER_2"/>
    <property type="match status" value="2"/>
</dbReference>
<accession>I1RL06</accession>
<accession>A0A098DKY5</accession>
<reference key="1">
    <citation type="journal article" date="2007" name="Science">
        <title>The Fusarium graminearum genome reveals a link between localized polymorphism and pathogen specialization.</title>
        <authorList>
            <person name="Cuomo C.A."/>
            <person name="Gueldener U."/>
            <person name="Xu J.-R."/>
            <person name="Trail F."/>
            <person name="Turgeon B.G."/>
            <person name="Di Pietro A."/>
            <person name="Walton J.D."/>
            <person name="Ma L.-J."/>
            <person name="Baker S.E."/>
            <person name="Rep M."/>
            <person name="Adam G."/>
            <person name="Antoniw J."/>
            <person name="Baldwin T."/>
            <person name="Calvo S.E."/>
            <person name="Chang Y.-L."/>
            <person name="DeCaprio D."/>
            <person name="Gale L.R."/>
            <person name="Gnerre S."/>
            <person name="Goswami R.S."/>
            <person name="Hammond-Kosack K."/>
            <person name="Harris L.J."/>
            <person name="Hilburn K."/>
            <person name="Kennell J.C."/>
            <person name="Kroken S."/>
            <person name="Magnuson J.K."/>
            <person name="Mannhaupt G."/>
            <person name="Mauceli E.W."/>
            <person name="Mewes H.-W."/>
            <person name="Mitterbauer R."/>
            <person name="Muehlbauer G."/>
            <person name="Muensterkoetter M."/>
            <person name="Nelson D."/>
            <person name="O'Donnell K."/>
            <person name="Ouellet T."/>
            <person name="Qi W."/>
            <person name="Quesneville H."/>
            <person name="Roncero M.I.G."/>
            <person name="Seong K.-Y."/>
            <person name="Tetko I.V."/>
            <person name="Urban M."/>
            <person name="Waalwijk C."/>
            <person name="Ward T.J."/>
            <person name="Yao J."/>
            <person name="Birren B.W."/>
            <person name="Kistler H.C."/>
        </authorList>
    </citation>
    <scope>NUCLEOTIDE SEQUENCE [LARGE SCALE GENOMIC DNA]</scope>
    <source>
        <strain>ATCC MYA-4620 / CBS 123657 / FGSC 9075 / NRRL 31084 / PH-1</strain>
    </source>
</reference>
<reference key="2">
    <citation type="journal article" date="2010" name="Nature">
        <title>Comparative genomics reveals mobile pathogenicity chromosomes in Fusarium.</title>
        <authorList>
            <person name="Ma L.-J."/>
            <person name="van der Does H.C."/>
            <person name="Borkovich K.A."/>
            <person name="Coleman J.J."/>
            <person name="Daboussi M.-J."/>
            <person name="Di Pietro A."/>
            <person name="Dufresne M."/>
            <person name="Freitag M."/>
            <person name="Grabherr M."/>
            <person name="Henrissat B."/>
            <person name="Houterman P.M."/>
            <person name="Kang S."/>
            <person name="Shim W.-B."/>
            <person name="Woloshuk C."/>
            <person name="Xie X."/>
            <person name="Xu J.-R."/>
            <person name="Antoniw J."/>
            <person name="Baker S.E."/>
            <person name="Bluhm B.H."/>
            <person name="Breakspear A."/>
            <person name="Brown D.W."/>
            <person name="Butchko R.A.E."/>
            <person name="Chapman S."/>
            <person name="Coulson R."/>
            <person name="Coutinho P.M."/>
            <person name="Danchin E.G.J."/>
            <person name="Diener A."/>
            <person name="Gale L.R."/>
            <person name="Gardiner D.M."/>
            <person name="Goff S."/>
            <person name="Hammond-Kosack K.E."/>
            <person name="Hilburn K."/>
            <person name="Hua-Van A."/>
            <person name="Jonkers W."/>
            <person name="Kazan K."/>
            <person name="Kodira C.D."/>
            <person name="Koehrsen M."/>
            <person name="Kumar L."/>
            <person name="Lee Y.-H."/>
            <person name="Li L."/>
            <person name="Manners J.M."/>
            <person name="Miranda-Saavedra D."/>
            <person name="Mukherjee M."/>
            <person name="Park G."/>
            <person name="Park J."/>
            <person name="Park S.-Y."/>
            <person name="Proctor R.H."/>
            <person name="Regev A."/>
            <person name="Ruiz-Roldan M.C."/>
            <person name="Sain D."/>
            <person name="Sakthikumar S."/>
            <person name="Sykes S."/>
            <person name="Schwartz D.C."/>
            <person name="Turgeon B.G."/>
            <person name="Wapinski I."/>
            <person name="Yoder O."/>
            <person name="Young S."/>
            <person name="Zeng Q."/>
            <person name="Zhou S."/>
            <person name="Galagan J."/>
            <person name="Cuomo C.A."/>
            <person name="Kistler H.C."/>
            <person name="Rep M."/>
        </authorList>
    </citation>
    <scope>GENOME REANNOTATION</scope>
    <source>
        <strain>ATCC MYA-4620 / CBS 123657 / FGSC 9075 / NRRL 31084 / PH-1</strain>
    </source>
</reference>
<reference key="3">
    <citation type="journal article" date="2015" name="BMC Genomics">
        <title>The completed genome sequence of the pathogenic ascomycete fungus Fusarium graminearum.</title>
        <authorList>
            <person name="King R."/>
            <person name="Urban M."/>
            <person name="Hammond-Kosack M.C.U."/>
            <person name="Hassani-Pak K."/>
            <person name="Hammond-Kosack K.E."/>
        </authorList>
    </citation>
    <scope>NUCLEOTIDE SEQUENCE [LARGE SCALE GENOMIC DNA]</scope>
    <source>
        <strain>ATCC MYA-4620 / CBS 123657 / FGSC 9075 / NRRL 31084 / PH-1</strain>
    </source>
</reference>
<reference key="4">
    <citation type="journal article" date="2011" name="Curr. Genet.">
        <title>A putative ABC transporter gene, ZRA1, is required for zearalenone production in Gibberella zeae.</title>
        <authorList>
            <person name="Lee S."/>
            <person name="Son H."/>
            <person name="Lee J."/>
            <person name="Lee Y.R."/>
            <person name="Lee Y.W."/>
        </authorList>
    </citation>
    <scope>FUNCTION</scope>
    <scope>DISRUPTION PHENOTYPE</scope>
    <scope>INDUCTION</scope>
    <scope>SUBCELLULAR LOCATION</scope>
</reference>
<gene>
    <name evidence="7" type="primary">ZRA1</name>
    <name type="ORF">FGRAMPH1_01T15627</name>
    <name type="ORF">FGSG_04580</name>
</gene>
<proteinExistence type="evidence at transcript level"/>
<sequence>MALPEANMSSTRSEQSSRSHDTIVGNEQPHSEKPAASAPGDQMSSDDEDEGPQTEEMIRRHSIVRDLARNYTNTSHHFTGSSADLFNAADANSPLNPSSENFNARAWARAMAKTMGENGSGFRQSGLCFQDMNVFGYGAETDYQKDVGNVWLGLPDMVHQMISPNANKRRIDILRGFDGVINAGEMCVVLGPPGSGCSTFLKSISGETNGIYIDDSTYFNYNGIPAEEMHKSHAGETIYTAEVDIHFPMLSVGDTLTFAARARCPQNLPPGIDHNLYSEHMRDVVMAMYGISHTINTQVGDNYIRGVSGGERKRVTIAEATLSNAPFQCWDNSTRGLDSANAIEFCKTLRLQSELFGQTCAVSIYQAPQTAYDLFDKALVIYEGRQIFFGPADEAKAYFINLGFECPDRQTTPDFLTSMTAPSERVVRPGWENKVPRTPDEFHARWKESQQYQIVRAEIESYKSLYPLNGSSADAFRENKHSAQAKGQRLKSPFTLSYMQQVQLCLWRGFRRLLGSPGVTIFQLIANTAVAFIASSLFYNMKPETGDFFKRGATLFLAVLSNAFASALEILTQYSQRPIVEKQARYAFYHPSAEAFASILVDMPYKITNSILFNVTLYFMTNLNRDAGAFFFFLLVSFIMVLAMSGVFRSIASLSRTLSQAMVPASLLILALVIFAGFVVPVDYMLGWCRWINYLDPVAYGFESLMVNEFSGRNFTCTAFVPNAQIPGYADVGGLNRACSTVGAIPGQSYVNGDAYINLEYKYFHAHKWRNVGILIAMTIFNHVVYIVATEFISAKKSKGEVLVFRRSNMPSKAKSDPEASSSRPIPTTEKNNNEVANIQGSTSVFHWNDVCYDIKIKGEPRRILDHVDGWVKPGTLTALMGVSGAGKTTLLDCLADRISMGVITGEMLVDGKIRDSSFQRRTGYVQQQDLHLETSTVREALTFSALLRQPASTPREEKIAYVDEVIKLLDMQEYADAVVGVLGEGLNVEQRKRLTIGVELAAKPPLLLFVDEPTSGLDSQTSWAILDLLEKLSKAGQSILCTIHQPSAMLFQRFDRLLFLAKGGRTIYFGDIGKNSETLTNYFVKHGSQECPNGENPAEWMLEVIGAAPGSHTDIDWHQTWRDSSEYQAVQTELQRLKAEGSANSVDQKSDPESYREFAAPFGQQLLIATKRVFEQYWRTPSYIYSKAALCIQVGLFLGLVFLNAPLSLRGLQNQMFAIFQMLTVFGQLVQMQMPHFVTQRSLYEVRERPSKTYSWKVFMLSQIIAEIPWNTLMSVFLFVCIYYPVGFNKNAEFAGQTAERGGLMWLLIWQFLIFTCTFAHAAIAITDTAEAGGNLANVVFMMSLFFCGVLAAPDKMPGFWIWMYRVSPFTYLVSAILSTGIANAEVKCAANELTTFNPTNGTTCGEYMDSYIKAAGGYLTNPDATSDCKFCTIKSTNVYLKALSASYDDRWRNFGIGMVYIVVNIVGALFLYWLIRMPKNKNKKKTA</sequence>
<comment type="function">
    <text evidence="6">ABC transporter involved in zearalenone production (PubMed:21833740).</text>
</comment>
<comment type="subcellular location">
    <subcellularLocation>
        <location evidence="6">Cell membrane</location>
        <topology evidence="1">Multi-pass membrane protein</topology>
    </subcellularLocation>
    <subcellularLocation>
        <location evidence="6">Vacuole membrane</location>
        <topology evidence="1">Multi-pass membrane protein</topology>
    </subcellularLocation>
</comment>
<comment type="induction">
    <text evidence="6">Expression is positively regulated by the zearalenone biosynthesis specific transcription factor ZEB2 (PubMed:21833740).</text>
</comment>
<comment type="disruption phenotype">
    <text evidence="6">Results in the loss of zearalenone production (PubMed:21833740).</text>
</comment>
<comment type="similarity">
    <text evidence="8">Belongs to the ABC transporter superfamily. ABCG family. PDR (TC 3.A.1.205) subfamily.</text>
</comment>
<name>ZRA1_GIBZE</name>
<feature type="chain" id="PRO_0000438787" description="ZEB2-regulated ABC transporter 1">
    <location>
        <begin position="1"/>
        <end position="1489"/>
    </location>
</feature>
<feature type="transmembrane region" description="Helical" evidence="1">
    <location>
        <begin position="513"/>
        <end position="533"/>
    </location>
</feature>
<feature type="transmembrane region" description="Helical" evidence="1">
    <location>
        <begin position="552"/>
        <end position="572"/>
    </location>
</feature>
<feature type="transmembrane region" description="Helical" evidence="1">
    <location>
        <begin position="599"/>
        <end position="619"/>
    </location>
</feature>
<feature type="transmembrane region" description="Helical" evidence="1">
    <location>
        <begin position="628"/>
        <end position="648"/>
    </location>
</feature>
<feature type="transmembrane region" description="Helical" evidence="1">
    <location>
        <begin position="662"/>
        <end position="682"/>
    </location>
</feature>
<feature type="transmembrane region" description="Helical" evidence="1">
    <location>
        <begin position="773"/>
        <end position="793"/>
    </location>
</feature>
<feature type="transmembrane region" description="Helical" evidence="1">
    <location>
        <begin position="1190"/>
        <end position="1210"/>
    </location>
</feature>
<feature type="transmembrane region" description="Helical" evidence="1">
    <location>
        <begin position="1218"/>
        <end position="1238"/>
    </location>
</feature>
<feature type="transmembrane region" description="Helical" evidence="1">
    <location>
        <begin position="1269"/>
        <end position="1289"/>
    </location>
</feature>
<feature type="transmembrane region" description="Helical" evidence="1">
    <location>
        <begin position="1307"/>
        <end position="1327"/>
    </location>
</feature>
<feature type="transmembrane region" description="Helical" evidence="1">
    <location>
        <begin position="1333"/>
        <end position="1353"/>
    </location>
</feature>
<feature type="transmembrane region" description="Helical" evidence="1">
    <location>
        <begin position="1457"/>
        <end position="1477"/>
    </location>
</feature>
<feature type="domain" description="ABC transporter 1" evidence="3">
    <location>
        <begin position="152"/>
        <end position="408"/>
    </location>
</feature>
<feature type="domain" description="ABC transporter 2" evidence="3">
    <location>
        <begin position="846"/>
        <end position="1088"/>
    </location>
</feature>
<feature type="region of interest" description="Disordered" evidence="5">
    <location>
        <begin position="1"/>
        <end position="55"/>
    </location>
</feature>
<feature type="region of interest" description="Disordered" evidence="5">
    <location>
        <begin position="811"/>
        <end position="834"/>
    </location>
</feature>
<feature type="compositionally biased region" description="Acidic residues" evidence="5">
    <location>
        <begin position="44"/>
        <end position="53"/>
    </location>
</feature>
<feature type="compositionally biased region" description="Polar residues" evidence="5">
    <location>
        <begin position="819"/>
        <end position="834"/>
    </location>
</feature>
<feature type="binding site" evidence="2">
    <location>
        <begin position="882"/>
        <end position="889"/>
    </location>
    <ligand>
        <name>ATP</name>
        <dbReference type="ChEBI" id="CHEBI:30616"/>
    </ligand>
</feature>
<feature type="glycosylation site" description="N-linked (GlcNAc...) asparagine" evidence="4">
    <location>
        <position position="7"/>
    </location>
</feature>
<feature type="glycosylation site" description="N-linked (GlcNAc...) asparagine" evidence="4">
    <location>
        <position position="70"/>
    </location>
</feature>
<feature type="glycosylation site" description="N-linked (GlcNAc...) asparagine" evidence="4">
    <location>
        <position position="73"/>
    </location>
</feature>
<feature type="glycosylation site" description="N-linked (GlcNAc...) asparagine" evidence="4">
    <location>
        <position position="118"/>
    </location>
</feature>
<feature type="glycosylation site" description="N-linked (GlcNAc...) asparagine" evidence="4">
    <location>
        <position position="332"/>
    </location>
</feature>
<feature type="glycosylation site" description="N-linked (GlcNAc...) asparagine" evidence="4">
    <location>
        <position position="469"/>
    </location>
</feature>
<feature type="glycosylation site" description="N-linked (GlcNAc...) asparagine" evidence="4">
    <location>
        <position position="714"/>
    </location>
</feature>
<feature type="glycosylation site" description="N-linked (GlcNAc...) asparagine" evidence="4">
    <location>
        <position position="1402"/>
    </location>
</feature>
<keyword id="KW-0067">ATP-binding</keyword>
<keyword id="KW-1003">Cell membrane</keyword>
<keyword id="KW-0325">Glycoprotein</keyword>
<keyword id="KW-0472">Membrane</keyword>
<keyword id="KW-0547">Nucleotide-binding</keyword>
<keyword id="KW-1185">Reference proteome</keyword>
<keyword id="KW-0677">Repeat</keyword>
<keyword id="KW-0812">Transmembrane</keyword>
<keyword id="KW-1133">Transmembrane helix</keyword>
<keyword id="KW-0813">Transport</keyword>
<keyword id="KW-0926">Vacuole</keyword>
<protein>
    <recommendedName>
        <fullName evidence="7">ZEB2-regulated ABC transporter 1</fullName>
    </recommendedName>
</protein>
<evidence type="ECO:0000255" key="1"/>
<evidence type="ECO:0000255" key="2">
    <source>
        <dbReference type="PROSITE-ProRule" id="PRU00136"/>
    </source>
</evidence>
<evidence type="ECO:0000255" key="3">
    <source>
        <dbReference type="PROSITE-ProRule" id="PRU00434"/>
    </source>
</evidence>
<evidence type="ECO:0000255" key="4">
    <source>
        <dbReference type="PROSITE-ProRule" id="PRU00498"/>
    </source>
</evidence>
<evidence type="ECO:0000256" key="5">
    <source>
        <dbReference type="SAM" id="MobiDB-lite"/>
    </source>
</evidence>
<evidence type="ECO:0000269" key="6">
    <source>
    </source>
</evidence>
<evidence type="ECO:0000303" key="7">
    <source>
    </source>
</evidence>
<evidence type="ECO:0000305" key="8"/>